<keyword id="KW-1185">Reference proteome</keyword>
<keyword id="KW-0687">Ribonucleoprotein</keyword>
<keyword id="KW-0689">Ribosomal protein</keyword>
<keyword id="KW-0694">RNA-binding</keyword>
<keyword id="KW-0699">rRNA-binding</keyword>
<gene>
    <name evidence="1" type="primary">rplT</name>
    <name type="ordered locus">Bmul_1776</name>
    <name type="ordered locus">BMULJ_01464</name>
</gene>
<accession>A9ABF6</accession>
<reference key="1">
    <citation type="submission" date="2007-10" db="EMBL/GenBank/DDBJ databases">
        <title>Complete sequence of chromosome 1 of Burkholderia multivorans ATCC 17616.</title>
        <authorList>
            <person name="Copeland A."/>
            <person name="Lucas S."/>
            <person name="Lapidus A."/>
            <person name="Barry K."/>
            <person name="Glavina del Rio T."/>
            <person name="Dalin E."/>
            <person name="Tice H."/>
            <person name="Pitluck S."/>
            <person name="Chain P."/>
            <person name="Malfatti S."/>
            <person name="Shin M."/>
            <person name="Vergez L."/>
            <person name="Schmutz J."/>
            <person name="Larimer F."/>
            <person name="Land M."/>
            <person name="Hauser L."/>
            <person name="Kyrpides N."/>
            <person name="Kim E."/>
            <person name="Tiedje J."/>
            <person name="Richardson P."/>
        </authorList>
    </citation>
    <scope>NUCLEOTIDE SEQUENCE [LARGE SCALE GENOMIC DNA]</scope>
    <source>
        <strain>ATCC 17616 / 249</strain>
    </source>
</reference>
<reference key="2">
    <citation type="submission" date="2007-04" db="EMBL/GenBank/DDBJ databases">
        <title>Complete genome sequence of Burkholderia multivorans ATCC 17616.</title>
        <authorList>
            <person name="Ohtsubo Y."/>
            <person name="Yamashita A."/>
            <person name="Kurokawa K."/>
            <person name="Takami H."/>
            <person name="Yuhara S."/>
            <person name="Nishiyama E."/>
            <person name="Endo R."/>
            <person name="Miyazaki R."/>
            <person name="Ono A."/>
            <person name="Yano K."/>
            <person name="Ito M."/>
            <person name="Sota M."/>
            <person name="Yuji N."/>
            <person name="Hattori M."/>
            <person name="Tsuda M."/>
        </authorList>
    </citation>
    <scope>NUCLEOTIDE SEQUENCE [LARGE SCALE GENOMIC DNA]</scope>
    <source>
        <strain>ATCC 17616 / 249</strain>
    </source>
</reference>
<evidence type="ECO:0000255" key="1">
    <source>
        <dbReference type="HAMAP-Rule" id="MF_00382"/>
    </source>
</evidence>
<evidence type="ECO:0000305" key="2"/>
<name>RL20_BURM1</name>
<proteinExistence type="inferred from homology"/>
<feature type="chain" id="PRO_1000122285" description="Large ribosomal subunit protein bL20">
    <location>
        <begin position="1"/>
        <end position="119"/>
    </location>
</feature>
<comment type="function">
    <text evidence="1">Binds directly to 23S ribosomal RNA and is necessary for the in vitro assembly process of the 50S ribosomal subunit. It is not involved in the protein synthesizing functions of that subunit.</text>
</comment>
<comment type="similarity">
    <text evidence="1">Belongs to the bacterial ribosomal protein bL20 family.</text>
</comment>
<organism>
    <name type="scientific">Burkholderia multivorans (strain ATCC 17616 / 249)</name>
    <dbReference type="NCBI Taxonomy" id="395019"/>
    <lineage>
        <taxon>Bacteria</taxon>
        <taxon>Pseudomonadati</taxon>
        <taxon>Pseudomonadota</taxon>
        <taxon>Betaproteobacteria</taxon>
        <taxon>Burkholderiales</taxon>
        <taxon>Burkholderiaceae</taxon>
        <taxon>Burkholderia</taxon>
        <taxon>Burkholderia cepacia complex</taxon>
    </lineage>
</organism>
<protein>
    <recommendedName>
        <fullName evidence="1">Large ribosomal subunit protein bL20</fullName>
    </recommendedName>
    <alternativeName>
        <fullName evidence="2">50S ribosomal protein L20</fullName>
    </alternativeName>
</protein>
<sequence>MPRVKRGVTARARHKKIINLAKGYRGRRNNVYRIAKQAVMRAGQYAYRDRRNKKRVFRALWITRINAAVRQHDMTYSVFINGLKKASIELDRKVLADMAVFDKAAFAAIVKQVKAAVAA</sequence>
<dbReference type="EMBL" id="CP000868">
    <property type="protein sequence ID" value="ABX15464.1"/>
    <property type="molecule type" value="Genomic_DNA"/>
</dbReference>
<dbReference type="EMBL" id="AP009385">
    <property type="protein sequence ID" value="BAG43395.1"/>
    <property type="molecule type" value="Genomic_DNA"/>
</dbReference>
<dbReference type="RefSeq" id="WP_004192938.1">
    <property type="nucleotide sequence ID" value="NC_010804.1"/>
</dbReference>
<dbReference type="SMR" id="A9ABF6"/>
<dbReference type="STRING" id="395019.BMULJ_01464"/>
<dbReference type="GeneID" id="98102114"/>
<dbReference type="KEGG" id="bmj:BMULJ_01464"/>
<dbReference type="KEGG" id="bmu:Bmul_1776"/>
<dbReference type="eggNOG" id="COG0292">
    <property type="taxonomic scope" value="Bacteria"/>
</dbReference>
<dbReference type="HOGENOM" id="CLU_123265_0_1_4"/>
<dbReference type="Proteomes" id="UP000008815">
    <property type="component" value="Chromosome 1"/>
</dbReference>
<dbReference type="GO" id="GO:1990904">
    <property type="term" value="C:ribonucleoprotein complex"/>
    <property type="evidence" value="ECO:0007669"/>
    <property type="project" value="UniProtKB-KW"/>
</dbReference>
<dbReference type="GO" id="GO:0005840">
    <property type="term" value="C:ribosome"/>
    <property type="evidence" value="ECO:0007669"/>
    <property type="project" value="UniProtKB-KW"/>
</dbReference>
<dbReference type="GO" id="GO:0019843">
    <property type="term" value="F:rRNA binding"/>
    <property type="evidence" value="ECO:0007669"/>
    <property type="project" value="UniProtKB-UniRule"/>
</dbReference>
<dbReference type="GO" id="GO:0003735">
    <property type="term" value="F:structural constituent of ribosome"/>
    <property type="evidence" value="ECO:0007669"/>
    <property type="project" value="InterPro"/>
</dbReference>
<dbReference type="GO" id="GO:0000027">
    <property type="term" value="P:ribosomal large subunit assembly"/>
    <property type="evidence" value="ECO:0007669"/>
    <property type="project" value="UniProtKB-UniRule"/>
</dbReference>
<dbReference type="GO" id="GO:0006412">
    <property type="term" value="P:translation"/>
    <property type="evidence" value="ECO:0007669"/>
    <property type="project" value="InterPro"/>
</dbReference>
<dbReference type="CDD" id="cd07026">
    <property type="entry name" value="Ribosomal_L20"/>
    <property type="match status" value="1"/>
</dbReference>
<dbReference type="FunFam" id="1.10.1900.20:FF:000001">
    <property type="entry name" value="50S ribosomal protein L20"/>
    <property type="match status" value="1"/>
</dbReference>
<dbReference type="Gene3D" id="6.10.160.10">
    <property type="match status" value="1"/>
</dbReference>
<dbReference type="Gene3D" id="1.10.1900.20">
    <property type="entry name" value="Ribosomal protein L20"/>
    <property type="match status" value="1"/>
</dbReference>
<dbReference type="HAMAP" id="MF_00382">
    <property type="entry name" value="Ribosomal_bL20"/>
    <property type="match status" value="1"/>
</dbReference>
<dbReference type="InterPro" id="IPR005813">
    <property type="entry name" value="Ribosomal_bL20"/>
</dbReference>
<dbReference type="InterPro" id="IPR049946">
    <property type="entry name" value="RIBOSOMAL_L20_CS"/>
</dbReference>
<dbReference type="InterPro" id="IPR035566">
    <property type="entry name" value="Ribosomal_protein_bL20_C"/>
</dbReference>
<dbReference type="NCBIfam" id="TIGR01032">
    <property type="entry name" value="rplT_bact"/>
    <property type="match status" value="1"/>
</dbReference>
<dbReference type="PANTHER" id="PTHR10986">
    <property type="entry name" value="39S RIBOSOMAL PROTEIN L20"/>
    <property type="match status" value="1"/>
</dbReference>
<dbReference type="Pfam" id="PF00453">
    <property type="entry name" value="Ribosomal_L20"/>
    <property type="match status" value="1"/>
</dbReference>
<dbReference type="PRINTS" id="PR00062">
    <property type="entry name" value="RIBOSOMALL20"/>
</dbReference>
<dbReference type="SUPFAM" id="SSF74731">
    <property type="entry name" value="Ribosomal protein L20"/>
    <property type="match status" value="1"/>
</dbReference>
<dbReference type="PROSITE" id="PS00937">
    <property type="entry name" value="RIBOSOMAL_L20"/>
    <property type="match status" value="1"/>
</dbReference>